<accession>E9PZQ0</accession>
<accession>Q60834</accession>
<accession>Q61779</accession>
<accession>Q61780</accession>
<accession>Q62173</accession>
<accession>Q62196</accession>
<accession>Q62235</accession>
<accession>Q78EJ6</accession>
<accession>Q7TNG1</accession>
<accession>Q80UQ5</accession>
<accession>Q80X16</accession>
<accession>Q99JF9</accession>
<proteinExistence type="evidence at protein level"/>
<comment type="function">
    <text evidence="10 11 12 13 14 15">Cytosolic calcium-activated calcium channel that mediates the release of Ca(2+) from the sarcoplasmic reticulum into the cytosol and thereby plays a key role in triggering muscle contraction following depolarization of T-tubules (PubMed:18003898, PubMed:21156754, PubMed:7515481, PubMed:7621815). Repeated very high-level exercise increases the open probability of the channel and leads to Ca(2+) leaking into the cytoplasm (PubMed:18268335). Can also mediate the release of Ca(2+) from intracellular stores in neurons, and may thereby promote prolonged Ca(2+) signaling in the brain (PubMed:22036948). Required for normal embryonic development of muscle fibers and skeletal muscle (PubMed:7515481). Required for normal heart morphogenesis, skin development and ossification during embryogenesis (PubMed:18003898, PubMed:7515481).</text>
</comment>
<comment type="catalytic activity">
    <reaction evidence="11 12 15">
        <text>Ca(2+)(in) = Ca(2+)(out)</text>
        <dbReference type="Rhea" id="RHEA:29671"/>
        <dbReference type="ChEBI" id="CHEBI:29108"/>
    </reaction>
</comment>
<comment type="activity regulation">
    <text evidence="12 13 15">The calcium release is activated by increased cytosolic calcium levels, by nitric oxyde (NO), caffeine and ATP (PubMed:21156754, PubMed:22036948, PubMed:7621815). Channel activity is modulated by the alkaloid ryanodine that binds to the open Ca-release channel with high affinity. At low concentrations, ryanodine maintains the channel in an open conformation. High ryanodine concentrations inhibit channel activity (PubMed:7621815). Channel activity is regulated by calmodulin (CALM). Channel activity is inhibited by magnesium ions, possibly by competition for calcium binding sites.</text>
</comment>
<comment type="subunit">
    <text evidence="3 4 10 11">Homotetramer (PubMed:18003898). Can also form heterotetramers with RYR2 (By similarity). Identified in a complex composed of RYR1, PDE4D, PKA, FKBP1A and protein phosphatase 1 (PP1) (PubMed:18268335). Repeated very high-level exercise decreases interaction with PDE4D and protein phosphatase 1 (PP1) (PubMed:18268335). Interacts with CALM; CALM with bound calcium inhibits the RYR1 channel activity (By similarity). Interacts with S100A1 (By similarity). Interacts with FKBP1A; this stabilizes the closed conformation of the channel. Interacts with CACNA1S; interaction with CACNA1S is important for activation of the RYR1 channel. Interacts with CACNB1. Interacts with TRDN and ASPH; these interactions stimulate RYR1 channel activity. Interacts with SELENON (By similarity). Interacts with scorpion calcins (AC P0DPT1; AC P0DM30; AC A0A1L4BJ42; AC P59868; AC P60254; AC B8QG00; AC L0GBR1; AC P60252; AC P60253) (By similarity).</text>
</comment>
<comment type="interaction">
    <interactant intactId="EBI-642079">
        <id>E9PZQ0</id>
    </interactant>
    <interactant intactId="EBI-643315">
        <id>O55108</id>
        <label>Bsg</label>
    </interactant>
    <organismsDiffer>false</organismsDiffer>
    <experiments>3</experiments>
</comment>
<comment type="interaction">
    <interactant intactId="EBI-642079">
        <id>E9PZQ0</id>
    </interactant>
    <interactant intactId="EBI-309114">
        <id>P49070</id>
        <label>Camlg</label>
    </interactant>
    <organismsDiffer>false</organismsDiffer>
    <experiments>3</experiments>
</comment>
<comment type="interaction">
    <interactant intactId="EBI-642079">
        <id>E9PZQ0</id>
    </interactant>
    <interactant intactId="EBI-6379901">
        <id>P26883</id>
        <label>Fkbp1a</label>
    </interactant>
    <organismsDiffer>false</organismsDiffer>
    <experiments>2</experiments>
</comment>
<comment type="subcellular location">
    <subcellularLocation>
        <location evidence="10 15">Sarcoplasmic reticulum membrane</location>
        <topology evidence="5">Multi-pass membrane protein</topology>
    </subcellularLocation>
    <text evidence="3">The number of predicted transmembrane domains varies between orthologs. Both N-terminus and C-terminus are cytoplasmic.</text>
</comment>
<comment type="tissue specificity">
    <text evidence="10 12 13 15 17">Detected in muscle and myotubes (at protein level) (PubMed:18003898). Ubiquitous. Detected in diaphragm, skeletal muscle, esophagus, spleen, submaxillary gland, adrenal gland, cerebellum, brain and in testis germ cells.</text>
</comment>
<comment type="domain">
    <text evidence="3 15 16">The calcium release channel activity resides in the C-terminal region while the remaining part of the protein constitutes the 'foot' structure spanning the junctional gap between the sarcoplasmic reticulum (SR) and the T-tubule (PubMed:7621815, PubMed:7724570). Pore opening is mediated via the cytoplasmic calcium-binding domains that mediate a small rotation of the channel-forming transmembrane regions that then leads to channel opening (By similarity).</text>
</comment>
<comment type="PTM">
    <text evidence="11 12">Channel activity is modulated by phosphorylation. Phosphorylation at Ser-2844 may increase channel activity. Repeated very high-level exercise increases phosphorylation at Ser-2844.</text>
</comment>
<comment type="PTM">
    <text evidence="1 11 13">Activated by reversible S-nitrosylation (PubMed:22036948). Repeated very high-level exercise increases S-nitrosylation.</text>
</comment>
<comment type="disruption phenotype">
    <text evidence="14">Perinatal lethality, due to severe defects in skeletal muscle development. Neonates do not breathe and do not move. Mutant mice show defects in muscle fiber development. Their muscles do not show a contractile response to electrical stimulation. In addition, mice display abnormal curvature of the spine, thin limbs, and an abnormal rib cage.</text>
</comment>
<comment type="similarity">
    <text evidence="18">Belongs to the ryanodine receptor (TC 1.A.3.1) family. RYR1 subfamily.</text>
</comment>
<keyword id="KW-0002">3D-structure</keyword>
<keyword id="KW-0067">ATP-binding</keyword>
<keyword id="KW-0106">Calcium</keyword>
<keyword id="KW-0107">Calcium channel</keyword>
<keyword id="KW-0109">Calcium transport</keyword>
<keyword id="KW-0112">Calmodulin-binding</keyword>
<keyword id="KW-0217">Developmental protein</keyword>
<keyword id="KW-0407">Ion channel</keyword>
<keyword id="KW-0406">Ion transport</keyword>
<keyword id="KW-1071">Ligand-gated ion channel</keyword>
<keyword id="KW-0472">Membrane</keyword>
<keyword id="KW-0479">Metal-binding</keyword>
<keyword id="KW-0547">Nucleotide-binding</keyword>
<keyword id="KW-0597">Phosphoprotein</keyword>
<keyword id="KW-0675">Receptor</keyword>
<keyword id="KW-1185">Reference proteome</keyword>
<keyword id="KW-0677">Repeat</keyword>
<keyword id="KW-0702">S-nitrosylation</keyword>
<keyword id="KW-0703">Sarcoplasmic reticulum</keyword>
<keyword id="KW-0812">Transmembrane</keyword>
<keyword id="KW-1133">Transmembrane helix</keyword>
<keyword id="KW-0813">Transport</keyword>
<evidence type="ECO:0000250" key="1"/>
<evidence type="ECO:0000250" key="2">
    <source>
        <dbReference type="UniProtKB" id="F1LMY4"/>
    </source>
</evidence>
<evidence type="ECO:0000250" key="3">
    <source>
        <dbReference type="UniProtKB" id="P11716"/>
    </source>
</evidence>
<evidence type="ECO:0000250" key="4">
    <source>
        <dbReference type="UniProtKB" id="P21817"/>
    </source>
</evidence>
<evidence type="ECO:0000255" key="5"/>
<evidence type="ECO:0000255" key="6">
    <source>
        <dbReference type="PROSITE-ProRule" id="PRU00131"/>
    </source>
</evidence>
<evidence type="ECO:0000255" key="7">
    <source>
        <dbReference type="PROSITE-ProRule" id="PRU00448"/>
    </source>
</evidence>
<evidence type="ECO:0000255" key="8">
    <source>
        <dbReference type="PROSITE-ProRule" id="PRU00548"/>
    </source>
</evidence>
<evidence type="ECO:0000256" key="9">
    <source>
        <dbReference type="SAM" id="MobiDB-lite"/>
    </source>
</evidence>
<evidence type="ECO:0000269" key="10">
    <source>
    </source>
</evidence>
<evidence type="ECO:0000269" key="11">
    <source>
    </source>
</evidence>
<evidence type="ECO:0000269" key="12">
    <source>
    </source>
</evidence>
<evidence type="ECO:0000269" key="13">
    <source>
    </source>
</evidence>
<evidence type="ECO:0000269" key="14">
    <source>
    </source>
</evidence>
<evidence type="ECO:0000269" key="15">
    <source>
    </source>
</evidence>
<evidence type="ECO:0000269" key="16">
    <source>
    </source>
</evidence>
<evidence type="ECO:0000269" key="17">
    <source>
    </source>
</evidence>
<evidence type="ECO:0000305" key="18"/>
<evidence type="ECO:0000305" key="19">
    <source>
    </source>
</evidence>
<evidence type="ECO:0000312" key="20">
    <source>
        <dbReference type="MGI" id="MGI:99659"/>
    </source>
</evidence>
<evidence type="ECO:0007744" key="21">
    <source>
    </source>
</evidence>
<organism>
    <name type="scientific">Mus musculus</name>
    <name type="common">Mouse</name>
    <dbReference type="NCBI Taxonomy" id="10090"/>
    <lineage>
        <taxon>Eukaryota</taxon>
        <taxon>Metazoa</taxon>
        <taxon>Chordata</taxon>
        <taxon>Craniata</taxon>
        <taxon>Vertebrata</taxon>
        <taxon>Euteleostomi</taxon>
        <taxon>Mammalia</taxon>
        <taxon>Eutheria</taxon>
        <taxon>Euarchontoglires</taxon>
        <taxon>Glires</taxon>
        <taxon>Rodentia</taxon>
        <taxon>Myomorpha</taxon>
        <taxon>Muroidea</taxon>
        <taxon>Muridae</taxon>
        <taxon>Murinae</taxon>
        <taxon>Mus</taxon>
        <taxon>Mus</taxon>
    </lineage>
</organism>
<dbReference type="EMBL" id="AY268935">
    <property type="protein sequence ID" value="AAP29981.1"/>
    <property type="molecule type" value="mRNA"/>
</dbReference>
<dbReference type="EMBL" id="AC164564">
    <property type="status" value="NOT_ANNOTATED_CDS"/>
    <property type="molecule type" value="Genomic_DNA"/>
</dbReference>
<dbReference type="EMBL" id="AC165142">
    <property type="status" value="NOT_ANNOTATED_CDS"/>
    <property type="molecule type" value="Genomic_DNA"/>
</dbReference>
<dbReference type="EMBL" id="D21798">
    <property type="protein sequence ID" value="BAA21010.1"/>
    <property type="molecule type" value="Genomic_DNA"/>
</dbReference>
<dbReference type="EMBL" id="D21796">
    <property type="protein sequence ID" value="BAA04821.1"/>
    <property type="molecule type" value="mRNA"/>
</dbReference>
<dbReference type="EMBL" id="D21797">
    <property type="protein sequence ID" value="BAA04822.1"/>
    <property type="molecule type" value="Genomic_DNA"/>
</dbReference>
<dbReference type="EMBL" id="AJ308737">
    <property type="protein sequence ID" value="CAC34624.1"/>
    <property type="molecule type" value="Genomic_DNA"/>
</dbReference>
<dbReference type="EMBL" id="BC051248">
    <property type="protein sequence ID" value="AAH51248.1"/>
    <property type="molecule type" value="mRNA"/>
</dbReference>
<dbReference type="EMBL" id="BC055487">
    <property type="protein sequence ID" value="AAH55487.1"/>
    <property type="molecule type" value="mRNA"/>
</dbReference>
<dbReference type="EMBL" id="X83932">
    <property type="protein sequence ID" value="CAA58784.1"/>
    <property type="molecule type" value="mRNA"/>
</dbReference>
<dbReference type="EMBL" id="U23754">
    <property type="protein sequence ID" value="AAA64955.1"/>
    <property type="molecule type" value="mRNA"/>
</dbReference>
<dbReference type="EMBL" id="D38216">
    <property type="protein sequence ID" value="BAA07391.1"/>
    <property type="molecule type" value="mRNA"/>
</dbReference>
<dbReference type="CCDS" id="CCDS39866.1"/>
<dbReference type="PIR" id="I48741">
    <property type="entry name" value="I48741"/>
</dbReference>
<dbReference type="PIR" id="I58087">
    <property type="entry name" value="I58087"/>
</dbReference>
<dbReference type="PIR" id="I78376">
    <property type="entry name" value="I78376"/>
</dbReference>
<dbReference type="PIR" id="I78377">
    <property type="entry name" value="I78377"/>
</dbReference>
<dbReference type="PIR" id="S56105">
    <property type="entry name" value="S56105"/>
</dbReference>
<dbReference type="RefSeq" id="NP_033135.2">
    <property type="nucleotide sequence ID" value="NM_009109.2"/>
</dbReference>
<dbReference type="PDB" id="8VJJ">
    <property type="method" value="EM"/>
    <property type="resolution" value="2.53 A"/>
    <property type="chains" value="A/B/C/D=1-5035"/>
</dbReference>
<dbReference type="PDB" id="8VJK">
    <property type="method" value="EM"/>
    <property type="resolution" value="2.92 A"/>
    <property type="chains" value="A/B/C/D=1-5035"/>
</dbReference>
<dbReference type="PDB" id="8VK3">
    <property type="method" value="EM"/>
    <property type="resolution" value="3.21 A"/>
    <property type="chains" value="A/B/C/D=1-5035"/>
</dbReference>
<dbReference type="PDB" id="8VK4">
    <property type="method" value="EM"/>
    <property type="resolution" value="3.56 A"/>
    <property type="chains" value="A/B/C/D=1-5035"/>
</dbReference>
<dbReference type="PDBsum" id="8VJJ"/>
<dbReference type="PDBsum" id="8VJK"/>
<dbReference type="PDBsum" id="8VK3"/>
<dbReference type="PDBsum" id="8VK4"/>
<dbReference type="EMDB" id="EMD-43283"/>
<dbReference type="EMDB" id="EMD-43284"/>
<dbReference type="EMDB" id="EMD-43299"/>
<dbReference type="EMDB" id="EMD-43304"/>
<dbReference type="SMR" id="E9PZQ0"/>
<dbReference type="BioGRID" id="203045">
    <property type="interactions" value="10"/>
</dbReference>
<dbReference type="ComplexPortal" id="CPX-3092">
    <property type="entry name" value="Ryanodine 1 complex"/>
</dbReference>
<dbReference type="DIP" id="DIP-29705N"/>
<dbReference type="FunCoup" id="E9PZQ0">
    <property type="interactions" value="580"/>
</dbReference>
<dbReference type="IntAct" id="E9PZQ0">
    <property type="interactions" value="29"/>
</dbReference>
<dbReference type="MINT" id="E9PZQ0"/>
<dbReference type="STRING" id="10090.ENSMUSP00000137123"/>
<dbReference type="BindingDB" id="E9PZQ0"/>
<dbReference type="ChEMBL" id="CHEMBL2133"/>
<dbReference type="GlyGen" id="E9PZQ0">
    <property type="glycosylation" value="5 sites, 1 O-linked glycan (1 site)"/>
</dbReference>
<dbReference type="iPTMnet" id="E9PZQ0"/>
<dbReference type="PhosphoSitePlus" id="E9PZQ0"/>
<dbReference type="jPOST" id="E9PZQ0"/>
<dbReference type="PaxDb" id="10090-ENSMUSP00000137123"/>
<dbReference type="PeptideAtlas" id="E9PZQ0"/>
<dbReference type="ProteomicsDB" id="256854"/>
<dbReference type="Antibodypedia" id="44914">
    <property type="antibodies" value="179 antibodies from 25 providers"/>
</dbReference>
<dbReference type="DNASU" id="20190"/>
<dbReference type="Ensembl" id="ENSMUST00000179893.9">
    <property type="protein sequence ID" value="ENSMUSP00000137123.2"/>
    <property type="gene ID" value="ENSMUSG00000030592.20"/>
</dbReference>
<dbReference type="GeneID" id="20190"/>
<dbReference type="KEGG" id="mmu:20190"/>
<dbReference type="UCSC" id="uc009gao.1">
    <property type="organism name" value="mouse"/>
</dbReference>
<dbReference type="AGR" id="MGI:99659"/>
<dbReference type="CTD" id="6261"/>
<dbReference type="MGI" id="MGI:99659">
    <property type="gene designation" value="Ryr1"/>
</dbReference>
<dbReference type="VEuPathDB" id="HostDB:ENSMUSG00000030592"/>
<dbReference type="eggNOG" id="KOG2243">
    <property type="taxonomic scope" value="Eukaryota"/>
</dbReference>
<dbReference type="GeneTree" id="ENSGT00940000155288"/>
<dbReference type="InParanoid" id="E9PZQ0"/>
<dbReference type="PhylomeDB" id="E9PZQ0"/>
<dbReference type="TreeFam" id="TF315244"/>
<dbReference type="Reactome" id="R-MMU-2672351">
    <property type="pathway name" value="Stimuli-sensing channels"/>
</dbReference>
<dbReference type="Reactome" id="R-MMU-5578775">
    <property type="pathway name" value="Ion homeostasis"/>
</dbReference>
<dbReference type="BioGRID-ORCS" id="20190">
    <property type="hits" value="2 hits in 78 CRISPR screens"/>
</dbReference>
<dbReference type="ChiTaRS" id="Ryr1">
    <property type="organism name" value="mouse"/>
</dbReference>
<dbReference type="PRO" id="PR:E9PZQ0"/>
<dbReference type="Proteomes" id="UP000000589">
    <property type="component" value="Chromosome 7"/>
</dbReference>
<dbReference type="RNAct" id="E9PZQ0">
    <property type="molecule type" value="protein"/>
</dbReference>
<dbReference type="Bgee" id="ENSMUSG00000030592">
    <property type="expression patterns" value="Expressed in triceps brachii and 117 other cell types or tissues"/>
</dbReference>
<dbReference type="ExpressionAtlas" id="E9PZQ0">
    <property type="expression patterns" value="baseline and differential"/>
</dbReference>
<dbReference type="GO" id="GO:0030314">
    <property type="term" value="C:junctional membrane complex"/>
    <property type="evidence" value="ECO:0000314"/>
    <property type="project" value="MGI"/>
</dbReference>
<dbReference type="GO" id="GO:0016020">
    <property type="term" value="C:membrane"/>
    <property type="evidence" value="ECO:0000314"/>
    <property type="project" value="MGI"/>
</dbReference>
<dbReference type="GO" id="GO:0031090">
    <property type="term" value="C:organelle membrane"/>
    <property type="evidence" value="ECO:0000250"/>
    <property type="project" value="UniProtKB"/>
</dbReference>
<dbReference type="GO" id="GO:0032991">
    <property type="term" value="C:protein-containing complex"/>
    <property type="evidence" value="ECO:0000314"/>
    <property type="project" value="UniProtKB"/>
</dbReference>
<dbReference type="GO" id="GO:1990425">
    <property type="term" value="C:ryanodine receptor complex"/>
    <property type="evidence" value="ECO:0000250"/>
    <property type="project" value="UniProtKB"/>
</dbReference>
<dbReference type="GO" id="GO:0016529">
    <property type="term" value="C:sarcoplasmic reticulum"/>
    <property type="evidence" value="ECO:0000314"/>
    <property type="project" value="MGI"/>
</dbReference>
<dbReference type="GO" id="GO:0033017">
    <property type="term" value="C:sarcoplasmic reticulum membrane"/>
    <property type="evidence" value="ECO:0000314"/>
    <property type="project" value="UniProtKB"/>
</dbReference>
<dbReference type="GO" id="GO:0005790">
    <property type="term" value="C:smooth endoplasmic reticulum"/>
    <property type="evidence" value="ECO:0000314"/>
    <property type="project" value="MGI"/>
</dbReference>
<dbReference type="GO" id="GO:0030315">
    <property type="term" value="C:T-tubule"/>
    <property type="evidence" value="ECO:0000314"/>
    <property type="project" value="MGI"/>
</dbReference>
<dbReference type="GO" id="GO:0014802">
    <property type="term" value="C:terminal cisterna"/>
    <property type="evidence" value="ECO:0000250"/>
    <property type="project" value="UniProtKB"/>
</dbReference>
<dbReference type="GO" id="GO:0005524">
    <property type="term" value="F:ATP binding"/>
    <property type="evidence" value="ECO:0000250"/>
    <property type="project" value="UniProtKB"/>
</dbReference>
<dbReference type="GO" id="GO:0005262">
    <property type="term" value="F:calcium channel activity"/>
    <property type="evidence" value="ECO:0000315"/>
    <property type="project" value="UniProtKB"/>
</dbReference>
<dbReference type="GO" id="GO:0005509">
    <property type="term" value="F:calcium ion binding"/>
    <property type="evidence" value="ECO:0000250"/>
    <property type="project" value="UniProtKB"/>
</dbReference>
<dbReference type="GO" id="GO:0005516">
    <property type="term" value="F:calmodulin binding"/>
    <property type="evidence" value="ECO:0007669"/>
    <property type="project" value="UniProtKB-KW"/>
</dbReference>
<dbReference type="GO" id="GO:0019899">
    <property type="term" value="F:enzyme binding"/>
    <property type="evidence" value="ECO:0000353"/>
    <property type="project" value="BHF-UCL"/>
</dbReference>
<dbReference type="GO" id="GO:0002020">
    <property type="term" value="F:protease binding"/>
    <property type="evidence" value="ECO:0000353"/>
    <property type="project" value="UniProtKB"/>
</dbReference>
<dbReference type="GO" id="GO:0005219">
    <property type="term" value="F:ryanodine-sensitive calcium-release channel activity"/>
    <property type="evidence" value="ECO:0000315"/>
    <property type="project" value="UniProtKB"/>
</dbReference>
<dbReference type="GO" id="GO:0005245">
    <property type="term" value="F:voltage-gated calcium channel activity"/>
    <property type="evidence" value="ECO:0000314"/>
    <property type="project" value="UniProtKB"/>
</dbReference>
<dbReference type="GO" id="GO:0006816">
    <property type="term" value="P:calcium ion transport"/>
    <property type="evidence" value="ECO:0000314"/>
    <property type="project" value="MGI"/>
</dbReference>
<dbReference type="GO" id="GO:0071313">
    <property type="term" value="P:cellular response to caffeine"/>
    <property type="evidence" value="ECO:0000315"/>
    <property type="project" value="UniProtKB"/>
</dbReference>
<dbReference type="GO" id="GO:0071277">
    <property type="term" value="P:cellular response to calcium ion"/>
    <property type="evidence" value="ECO:0000250"/>
    <property type="project" value="UniProtKB"/>
</dbReference>
<dbReference type="GO" id="GO:0006874">
    <property type="term" value="P:intracellular calcium ion homeostasis"/>
    <property type="evidence" value="ECO:0007669"/>
    <property type="project" value="InterPro"/>
</dbReference>
<dbReference type="GO" id="GO:0006936">
    <property type="term" value="P:muscle contraction"/>
    <property type="evidence" value="ECO:0000314"/>
    <property type="project" value="MGI"/>
</dbReference>
<dbReference type="GO" id="GO:0043931">
    <property type="term" value="P:ossification involved in bone maturation"/>
    <property type="evidence" value="ECO:0000315"/>
    <property type="project" value="UniProtKB"/>
</dbReference>
<dbReference type="GO" id="GO:0003151">
    <property type="term" value="P:outflow tract morphogenesis"/>
    <property type="evidence" value="ECO:0000315"/>
    <property type="project" value="UniProtKB"/>
</dbReference>
<dbReference type="GO" id="GO:0051289">
    <property type="term" value="P:protein homotetramerization"/>
    <property type="evidence" value="ECO:0000250"/>
    <property type="project" value="UniProtKB"/>
</dbReference>
<dbReference type="GO" id="GO:0006937">
    <property type="term" value="P:regulation of muscle contraction"/>
    <property type="evidence" value="ECO:0000304"/>
    <property type="project" value="MGI"/>
</dbReference>
<dbReference type="GO" id="GO:0051209">
    <property type="term" value="P:release of sequestered calcium ion into cytosol"/>
    <property type="evidence" value="ECO:0000315"/>
    <property type="project" value="MGI"/>
</dbReference>
<dbReference type="GO" id="GO:0014808">
    <property type="term" value="P:release of sequestered calcium ion into cytosol by sarcoplasmic reticulum"/>
    <property type="evidence" value="ECO:0000315"/>
    <property type="project" value="UniProtKB"/>
</dbReference>
<dbReference type="GO" id="GO:0048741">
    <property type="term" value="P:skeletal muscle fiber development"/>
    <property type="evidence" value="ECO:0000315"/>
    <property type="project" value="UniProtKB"/>
</dbReference>
<dbReference type="GO" id="GO:0043588">
    <property type="term" value="P:skin development"/>
    <property type="evidence" value="ECO:0000315"/>
    <property type="project" value="UniProtKB"/>
</dbReference>
<dbReference type="CDD" id="cd23290">
    <property type="entry name" value="beta-trefoil_MIR_RyR1"/>
    <property type="match status" value="1"/>
</dbReference>
<dbReference type="CDD" id="cd12877">
    <property type="entry name" value="SPRY1_RyR"/>
    <property type="match status" value="1"/>
</dbReference>
<dbReference type="CDD" id="cd12878">
    <property type="entry name" value="SPRY2_RyR"/>
    <property type="match status" value="1"/>
</dbReference>
<dbReference type="CDD" id="cd12879">
    <property type="entry name" value="SPRY3_RyR"/>
    <property type="match status" value="1"/>
</dbReference>
<dbReference type="FunFam" id="1.10.490.160:FF:000008">
    <property type="match status" value="1"/>
</dbReference>
<dbReference type="FunFam" id="2.60.120.920:FF:000019">
    <property type="entry name" value="Ryanodine receptor 1 (skeletal)"/>
    <property type="match status" value="1"/>
</dbReference>
<dbReference type="FunFam" id="2.80.10.50:FF:000009">
    <property type="entry name" value="Ryanodine receptor 1 (skeletal)"/>
    <property type="match status" value="1"/>
</dbReference>
<dbReference type="FunFam" id="1.10.490.160:FF:000001">
    <property type="entry name" value="Ryanodine receptor 2 (Cardiac)"/>
    <property type="match status" value="1"/>
</dbReference>
<dbReference type="FunFam" id="2.80.10.50:FF:000006">
    <property type="entry name" value="Ryanodine receptor 2 (Cardiac)"/>
    <property type="match status" value="1"/>
</dbReference>
<dbReference type="FunFam" id="1.10.287.70:FF:000017">
    <property type="entry name" value="ryanodine receptor isoform X2"/>
    <property type="match status" value="1"/>
</dbReference>
<dbReference type="FunFam" id="1.25.10.30:FF:000002">
    <property type="entry name" value="ryanodine receptor isoform X2"/>
    <property type="match status" value="1"/>
</dbReference>
<dbReference type="FunFam" id="2.60.120.920:FF:000002">
    <property type="entry name" value="ryanodine receptor isoform X2"/>
    <property type="match status" value="1"/>
</dbReference>
<dbReference type="FunFam" id="2.60.120.920:FF:000003">
    <property type="entry name" value="ryanodine receptor isoform X2"/>
    <property type="match status" value="1"/>
</dbReference>
<dbReference type="Gene3D" id="1.10.287.70">
    <property type="match status" value="1"/>
</dbReference>
<dbReference type="Gene3D" id="1.10.490.160">
    <property type="match status" value="2"/>
</dbReference>
<dbReference type="Gene3D" id="2.60.120.920">
    <property type="match status" value="3"/>
</dbReference>
<dbReference type="Gene3D" id="2.80.10.50">
    <property type="match status" value="2"/>
</dbReference>
<dbReference type="Gene3D" id="6.20.350.10">
    <property type="match status" value="1"/>
</dbReference>
<dbReference type="Gene3D" id="1.25.10.30">
    <property type="entry name" value="IP3 receptor type 1 binding core, RIH domain"/>
    <property type="match status" value="1"/>
</dbReference>
<dbReference type="InterPro" id="IPR001870">
    <property type="entry name" value="B30.2/SPRY"/>
</dbReference>
<dbReference type="InterPro" id="IPR043136">
    <property type="entry name" value="B30.2/SPRY_sf"/>
</dbReference>
<dbReference type="InterPro" id="IPR013320">
    <property type="entry name" value="ConA-like_dom_sf"/>
</dbReference>
<dbReference type="InterPro" id="IPR011992">
    <property type="entry name" value="EF-hand-dom_pair"/>
</dbReference>
<dbReference type="InterPro" id="IPR014821">
    <property type="entry name" value="Ins145_P3_rcpt"/>
</dbReference>
<dbReference type="InterPro" id="IPR005821">
    <property type="entry name" value="Ion_trans_dom"/>
</dbReference>
<dbReference type="InterPro" id="IPR036300">
    <property type="entry name" value="MIR_dom_sf"/>
</dbReference>
<dbReference type="InterPro" id="IPR016093">
    <property type="entry name" value="MIR_motif"/>
</dbReference>
<dbReference type="InterPro" id="IPR013662">
    <property type="entry name" value="RIH_assoc-dom"/>
</dbReference>
<dbReference type="InterPro" id="IPR000699">
    <property type="entry name" value="RIH_dom"/>
</dbReference>
<dbReference type="InterPro" id="IPR013333">
    <property type="entry name" value="Ryan_recept"/>
</dbReference>
<dbReference type="InterPro" id="IPR015925">
    <property type="entry name" value="Ryanodine_IP3_receptor"/>
</dbReference>
<dbReference type="InterPro" id="IPR003032">
    <property type="entry name" value="Ryanodine_rcpt"/>
</dbReference>
<dbReference type="InterPro" id="IPR009460">
    <property type="entry name" value="Ryanrecept_TM4-6"/>
</dbReference>
<dbReference type="InterPro" id="IPR048581">
    <property type="entry name" value="RYDR_Jsol"/>
</dbReference>
<dbReference type="InterPro" id="IPR035910">
    <property type="entry name" value="RyR/IP3R_RIH_dom_sf"/>
</dbReference>
<dbReference type="InterPro" id="IPR035761">
    <property type="entry name" value="SPRY1_RyR"/>
</dbReference>
<dbReference type="InterPro" id="IPR035764">
    <property type="entry name" value="SPRY2_RyR"/>
</dbReference>
<dbReference type="InterPro" id="IPR035762">
    <property type="entry name" value="SPRY3_RyR"/>
</dbReference>
<dbReference type="InterPro" id="IPR003877">
    <property type="entry name" value="SPRY_dom"/>
</dbReference>
<dbReference type="PANTHER" id="PTHR46399">
    <property type="entry name" value="B30.2/SPRY DOMAIN-CONTAINING PROTEIN"/>
    <property type="match status" value="1"/>
</dbReference>
<dbReference type="PANTHER" id="PTHR46399:SF10">
    <property type="entry name" value="RYANODINE RECEPTOR 1"/>
    <property type="match status" value="1"/>
</dbReference>
<dbReference type="Pfam" id="PF08709">
    <property type="entry name" value="Ins145_P3_rec"/>
    <property type="match status" value="1"/>
</dbReference>
<dbReference type="Pfam" id="PF00520">
    <property type="entry name" value="Ion_trans"/>
    <property type="match status" value="1"/>
</dbReference>
<dbReference type="Pfam" id="PF02815">
    <property type="entry name" value="MIR"/>
    <property type="match status" value="1"/>
</dbReference>
<dbReference type="Pfam" id="PF08454">
    <property type="entry name" value="RIH_assoc"/>
    <property type="match status" value="1"/>
</dbReference>
<dbReference type="Pfam" id="PF06459">
    <property type="entry name" value="RR_TM4-6"/>
    <property type="match status" value="1"/>
</dbReference>
<dbReference type="Pfam" id="PF01365">
    <property type="entry name" value="RYDR_ITPR"/>
    <property type="match status" value="2"/>
</dbReference>
<dbReference type="Pfam" id="PF21119">
    <property type="entry name" value="RYDR_Jsol"/>
    <property type="match status" value="1"/>
</dbReference>
<dbReference type="Pfam" id="PF02026">
    <property type="entry name" value="RyR"/>
    <property type="match status" value="4"/>
</dbReference>
<dbReference type="Pfam" id="PF00622">
    <property type="entry name" value="SPRY"/>
    <property type="match status" value="3"/>
</dbReference>
<dbReference type="PRINTS" id="PR00795">
    <property type="entry name" value="RYANODINER"/>
</dbReference>
<dbReference type="SMART" id="SM00472">
    <property type="entry name" value="MIR"/>
    <property type="match status" value="4"/>
</dbReference>
<dbReference type="SMART" id="SM00449">
    <property type="entry name" value="SPRY"/>
    <property type="match status" value="3"/>
</dbReference>
<dbReference type="SUPFAM" id="SSF49899">
    <property type="entry name" value="Concanavalin A-like lectins/glucanases"/>
    <property type="match status" value="3"/>
</dbReference>
<dbReference type="SUPFAM" id="SSF47473">
    <property type="entry name" value="EF-hand"/>
    <property type="match status" value="1"/>
</dbReference>
<dbReference type="SUPFAM" id="SSF100909">
    <property type="entry name" value="IP3 receptor type 1 binding core, domain 2"/>
    <property type="match status" value="2"/>
</dbReference>
<dbReference type="SUPFAM" id="SSF82109">
    <property type="entry name" value="MIR domain"/>
    <property type="match status" value="2"/>
</dbReference>
<dbReference type="PROSITE" id="PS50188">
    <property type="entry name" value="B302_SPRY"/>
    <property type="match status" value="3"/>
</dbReference>
<dbReference type="PROSITE" id="PS50919">
    <property type="entry name" value="MIR"/>
    <property type="match status" value="5"/>
</dbReference>
<feature type="chain" id="PRO_0000415566" description="Ryanodine receptor 1">
    <location>
        <begin position="1"/>
        <end position="5035"/>
    </location>
</feature>
<feature type="topological domain" description="Cytoplasmic" evidence="3">
    <location>
        <begin position="1"/>
        <end position="4556"/>
    </location>
</feature>
<feature type="transmembrane region" description="Helical; Name=1" evidence="3">
    <location>
        <begin position="4557"/>
        <end position="4577"/>
    </location>
</feature>
<feature type="topological domain" description="Lumenal" evidence="3">
    <location>
        <begin position="4578"/>
        <end position="4638"/>
    </location>
</feature>
<feature type="transmembrane region" description="Helical; Name=2" evidence="3">
    <location>
        <begin position="4639"/>
        <end position="4659"/>
    </location>
</feature>
<feature type="topological domain" description="Cytoplasmic" evidence="3">
    <location>
        <begin position="4660"/>
        <end position="4777"/>
    </location>
</feature>
<feature type="transmembrane region" description="Helical; Name=3" evidence="3">
    <location>
        <begin position="4778"/>
        <end position="4800"/>
    </location>
</feature>
<feature type="topological domain" description="Lumenal" evidence="3">
    <location>
        <position position="4801"/>
    </location>
</feature>
<feature type="transmembrane region" description="Helical; Name=4" evidence="3">
    <location>
        <begin position="4802"/>
        <end position="4818"/>
    </location>
</feature>
<feature type="topological domain" description="Cytoplasmic" evidence="3">
    <location>
        <begin position="4819"/>
        <end position="4833"/>
    </location>
</feature>
<feature type="transmembrane region" description="Helical; Name=5" evidence="3">
    <location>
        <begin position="4834"/>
        <end position="4854"/>
    </location>
</feature>
<feature type="topological domain" description="Lumenal" evidence="3">
    <location>
        <begin position="4855"/>
        <end position="4877"/>
    </location>
</feature>
<feature type="intramembrane region" description="Pore-forming" evidence="3">
    <location>
        <begin position="4878"/>
        <end position="4897"/>
    </location>
</feature>
<feature type="topological domain" description="Lumenal" evidence="3">
    <location>
        <begin position="4898"/>
        <end position="4917"/>
    </location>
</feature>
<feature type="transmembrane region" description="Helical; Name=6" evidence="3">
    <location>
        <begin position="4918"/>
        <end position="4938"/>
    </location>
</feature>
<feature type="topological domain" description="Cytoplasmic" evidence="3">
    <location>
        <begin position="4939"/>
        <end position="5035"/>
    </location>
</feature>
<feature type="domain" description="MIR 1" evidence="6">
    <location>
        <begin position="99"/>
        <end position="154"/>
    </location>
</feature>
<feature type="domain" description="MIR 2" evidence="6">
    <location>
        <begin position="161"/>
        <end position="206"/>
    </location>
</feature>
<feature type="domain" description="MIR 3" evidence="6">
    <location>
        <begin position="212"/>
        <end position="266"/>
    </location>
</feature>
<feature type="domain" description="MIR 4" evidence="6">
    <location>
        <begin position="272"/>
        <end position="329"/>
    </location>
</feature>
<feature type="domain" description="MIR 5" evidence="6">
    <location>
        <begin position="337"/>
        <end position="394"/>
    </location>
</feature>
<feature type="domain" description="B30.2/SPRY 1" evidence="8">
    <location>
        <begin position="583"/>
        <end position="799"/>
    </location>
</feature>
<feature type="repeat" description="1">
    <location>
        <begin position="843"/>
        <end position="956"/>
    </location>
</feature>
<feature type="repeat" description="2">
    <location>
        <begin position="957"/>
        <end position="1070"/>
    </location>
</feature>
<feature type="domain" description="B30.2/SPRY 2" evidence="8">
    <location>
        <begin position="1015"/>
        <end position="1210"/>
    </location>
</feature>
<feature type="repeat" description="3; truncated">
    <location>
        <begin position="1346"/>
        <end position="1361"/>
    </location>
</feature>
<feature type="domain" description="B30.2/SPRY 3" evidence="8">
    <location>
        <begin position="1359"/>
        <end position="1572"/>
    </location>
</feature>
<feature type="repeat" description="4; truncated">
    <location>
        <begin position="1374"/>
        <end position="1389"/>
    </location>
</feature>
<feature type="repeat" description="5">
    <location>
        <begin position="2727"/>
        <end position="2846"/>
    </location>
</feature>
<feature type="repeat" description="6">
    <location>
        <begin position="2847"/>
        <end position="2960"/>
    </location>
</feature>
<feature type="domain" description="EF-hand" evidence="7">
    <location>
        <begin position="4078"/>
        <end position="4106"/>
    </location>
</feature>
<feature type="region of interest" description="Interaction with FKBP1A" evidence="3">
    <location>
        <begin position="671"/>
        <end position="682"/>
    </location>
</feature>
<feature type="region of interest" description="6 X approximate repeats">
    <location>
        <begin position="843"/>
        <end position="2960"/>
    </location>
</feature>
<feature type="region of interest" description="Disordered" evidence="9">
    <location>
        <begin position="1309"/>
        <end position="1387"/>
    </location>
</feature>
<feature type="region of interest" description="Disordered" evidence="9">
    <location>
        <begin position="1873"/>
        <end position="1928"/>
    </location>
</feature>
<feature type="region of interest" description="Disordered" evidence="9">
    <location>
        <begin position="2391"/>
        <end position="2414"/>
    </location>
</feature>
<feature type="region of interest" description="Disordered" evidence="9">
    <location>
        <begin position="2828"/>
        <end position="2859"/>
    </location>
</feature>
<feature type="region of interest" description="Disordered" evidence="9">
    <location>
        <begin position="3479"/>
        <end position="3502"/>
    </location>
</feature>
<feature type="region of interest" description="Interaction with CALM" evidence="1">
    <location>
        <begin position="3615"/>
        <end position="3644"/>
    </location>
</feature>
<feature type="region of interest" description="Disordered" evidence="9">
    <location>
        <begin position="4255"/>
        <end position="4283"/>
    </location>
</feature>
<feature type="region of interest" description="Disordered" evidence="9">
    <location>
        <begin position="4378"/>
        <end position="4531"/>
    </location>
</feature>
<feature type="region of interest" description="Disordered" evidence="9">
    <location>
        <begin position="4586"/>
        <end position="4618"/>
    </location>
</feature>
<feature type="short sequence motif" description="Selectivity filter" evidence="3">
    <location>
        <begin position="4892"/>
        <end position="4898"/>
    </location>
</feature>
<feature type="compositionally biased region" description="Basic and acidic residues" evidence="9">
    <location>
        <begin position="1374"/>
        <end position="1384"/>
    </location>
</feature>
<feature type="compositionally biased region" description="Acidic residues" evidence="9">
    <location>
        <begin position="1874"/>
        <end position="1925"/>
    </location>
</feature>
<feature type="compositionally biased region" description="Acidic residues" evidence="9">
    <location>
        <begin position="4257"/>
        <end position="4274"/>
    </location>
</feature>
<feature type="compositionally biased region" description="Acidic residues" evidence="9">
    <location>
        <begin position="4400"/>
        <end position="4422"/>
    </location>
</feature>
<feature type="compositionally biased region" description="Acidic residues" evidence="9">
    <location>
        <begin position="4478"/>
        <end position="4494"/>
    </location>
</feature>
<feature type="compositionally biased region" description="Basic and acidic residues" evidence="9">
    <location>
        <begin position="4495"/>
        <end position="4509"/>
    </location>
</feature>
<feature type="compositionally biased region" description="Pro residues" evidence="9">
    <location>
        <begin position="4510"/>
        <end position="4524"/>
    </location>
</feature>
<feature type="compositionally biased region" description="Gly residues" evidence="9">
    <location>
        <begin position="4593"/>
        <end position="4611"/>
    </location>
</feature>
<feature type="binding site" evidence="3">
    <location>
        <position position="3896"/>
    </location>
    <ligand>
        <name>Ca(2+)</name>
        <dbReference type="ChEBI" id="CHEBI:29108"/>
    </ligand>
</feature>
<feature type="binding site" evidence="3">
    <location>
        <position position="3970"/>
    </location>
    <ligand>
        <name>Ca(2+)</name>
        <dbReference type="ChEBI" id="CHEBI:29108"/>
    </ligand>
</feature>
<feature type="binding site" evidence="3">
    <location>
        <begin position="4214"/>
        <end position="4218"/>
    </location>
    <ligand>
        <name>ATP</name>
        <dbReference type="ChEBI" id="CHEBI:30616"/>
    </ligand>
</feature>
<feature type="binding site" evidence="3">
    <location>
        <position position="4714"/>
    </location>
    <ligand>
        <name>caffeine</name>
        <dbReference type="ChEBI" id="CHEBI:27732"/>
    </ligand>
</feature>
<feature type="binding site" evidence="3">
    <location>
        <begin position="4952"/>
        <end position="4957"/>
    </location>
    <ligand>
        <name>ATP</name>
        <dbReference type="ChEBI" id="CHEBI:30616"/>
    </ligand>
</feature>
<feature type="binding site" evidence="3">
    <location>
        <begin position="4977"/>
        <end position="4983"/>
    </location>
    <ligand>
        <name>ATP</name>
        <dbReference type="ChEBI" id="CHEBI:30616"/>
    </ligand>
</feature>
<feature type="binding site" evidence="3">
    <location>
        <position position="4999"/>
    </location>
    <ligand>
        <name>Ca(2+)</name>
        <dbReference type="ChEBI" id="CHEBI:29108"/>
    </ligand>
</feature>
<feature type="modified residue" description="Phosphoserine" evidence="2">
    <location>
        <position position="1339"/>
    </location>
</feature>
<feature type="modified residue" description="Phosphoserine" evidence="2">
    <location>
        <position position="2346"/>
    </location>
</feature>
<feature type="modified residue" description="Phosphoserine; by PKA and PKG" evidence="11 12 21">
    <location>
        <position position="2844"/>
    </location>
</feature>
<feature type="modified residue" description="S-nitrosocysteine" evidence="3">
    <location>
        <position position="3636"/>
    </location>
</feature>
<feature type="modified residue" description="Phosphothreonine" evidence="2">
    <location>
        <position position="4464"/>
    </location>
</feature>
<feature type="modified residue" description="Phosphoserine" evidence="2">
    <location>
        <position position="4468"/>
    </location>
</feature>
<feature type="modified residue" description="Phosphotyrosine" evidence="4">
    <location>
        <position position="4861"/>
    </location>
</feature>
<feature type="modified residue" description="Phosphoserine" evidence="4">
    <location>
        <position position="4864"/>
    </location>
</feature>
<feature type="mutagenesis site" description="Increased channel activity, leading to permanently increased cytoplasmic Ca(2+) levels. Increased activation by calcium, and increased ryanodine binding." evidence="12">
    <original>R</original>
    <variation>C</variation>
    <location>
        <position position="165"/>
    </location>
</feature>
<feature type="mutagenesis site" description="Causes paralysis and perinatal death in homozygous mice, apparently due to asphyxia. Mutant mice have greatly reduced and amorphous skeletal muscle." evidence="10">
    <original>I</original>
    <variation>T</variation>
    <location>
        <position position="4895"/>
    </location>
</feature>
<feature type="sequence conflict" description="In Ref. 5; CAC34624." evidence="18" ref="5">
    <original>R</original>
    <variation>C</variation>
    <location>
        <position position="616"/>
    </location>
</feature>
<feature type="sequence conflict" description="In Ref. 1; AAP29981." evidence="18" ref="1">
    <original>A</original>
    <variation>S</variation>
    <location>
        <position position="1380"/>
    </location>
</feature>
<feature type="sequence conflict" description="In Ref. 1; AAP29981." evidence="18" ref="1">
    <original>D</original>
    <variation>V</variation>
    <location>
        <position position="3484"/>
    </location>
</feature>
<feature type="sequence conflict" description="In Ref. 8; AAA64955." evidence="18" ref="8">
    <original>I</original>
    <variation>L</variation>
    <location>
        <position position="4766"/>
    </location>
</feature>
<feature type="sequence conflict" description="In Ref. 7; CAA58784." evidence="18" ref="7">
    <original>L</original>
    <variation>V</variation>
    <location>
        <position position="4821"/>
    </location>
</feature>
<feature type="sequence conflict" description="In Ref. 7; CAA58784." evidence="18" ref="7">
    <original>G</original>
    <variation>A</variation>
    <location>
        <position position="4888"/>
    </location>
</feature>
<protein>
    <recommendedName>
        <fullName evidence="19">Ryanodine receptor 1</fullName>
        <shortName>RYR-1</shortName>
        <shortName>RyR1</shortName>
    </recommendedName>
    <alternativeName>
        <fullName>Skeletal muscle calcium release channel</fullName>
    </alternativeName>
    <alternativeName>
        <fullName>Skeletal muscle ryanodine receptor</fullName>
    </alternativeName>
    <alternativeName>
        <fullName>Skeletal muscle-type ryanodine receptor</fullName>
    </alternativeName>
    <alternativeName>
        <fullName>Type 1 ryanodine receptor</fullName>
    </alternativeName>
</protein>
<gene>
    <name evidence="20" type="primary">Ryr1</name>
</gene>
<reference key="1">
    <citation type="journal article" date="2007" name="Proc. Natl. Acad. Sci. U.S.A.">
        <title>An Ryr1I4895T mutation abolishes Ca2+ release channel function and delays development in homozygous offspring of a mutant mouse line.</title>
        <authorList>
            <person name="Zvaritch E."/>
            <person name="Depreux F."/>
            <person name="Kraeva N."/>
            <person name="Loy R.E."/>
            <person name="Goonasekera S.A."/>
            <person name="Boncompagni S."/>
            <person name="Kraev A."/>
            <person name="Gramolini A.O."/>
            <person name="Dirksen R.T."/>
            <person name="Franzini-Armstrong C."/>
            <person name="Seidman C.E."/>
            <person name="Seidman J.G."/>
            <person name="MacLennan D.H."/>
        </authorList>
    </citation>
    <scope>NUCLEOTIDE SEQUENCE [MRNA]</scope>
    <scope>FUNCTION</scope>
    <scope>SUBCELLULAR LOCATION</scope>
    <scope>SUBUNIT</scope>
    <scope>TISSUE SPECIFICITY</scope>
    <scope>MUTAGENESIS OF ILE-4895</scope>
    <source>
        <strain>BALB/c X CD-1</strain>
    </source>
</reference>
<reference key="2">
    <citation type="journal article" date="2008" name="Proc. Natl. Acad. Sci. U.S.A.">
        <authorList>
            <person name="Zvaritch E."/>
            <person name="Depreux F."/>
            <person name="Kraeva N."/>
            <person name="Loy R.E."/>
            <person name="Goonasekera S.A."/>
            <person name="Boncompagni S."/>
            <person name="Kraev A."/>
            <person name="Gramolini A.O."/>
            <person name="Dirksen R.T."/>
            <person name="Franzini-Armstrong C."/>
            <person name="Seidman C.E."/>
            <person name="Seidman J.G."/>
            <person name="MacLennan D.H."/>
        </authorList>
    </citation>
    <scope>ERRATUM OF PUBMED:18003898</scope>
</reference>
<reference key="3">
    <citation type="journal article" date="2009" name="PLoS Biol.">
        <title>Lineage-specific biology revealed by a finished genome assembly of the mouse.</title>
        <authorList>
            <person name="Church D.M."/>
            <person name="Goodstadt L."/>
            <person name="Hillier L.W."/>
            <person name="Zody M.C."/>
            <person name="Goldstein S."/>
            <person name="She X."/>
            <person name="Bult C.J."/>
            <person name="Agarwala R."/>
            <person name="Cherry J.L."/>
            <person name="DiCuccio M."/>
            <person name="Hlavina W."/>
            <person name="Kapustin Y."/>
            <person name="Meric P."/>
            <person name="Maglott D."/>
            <person name="Birtle Z."/>
            <person name="Marques A.C."/>
            <person name="Graves T."/>
            <person name="Zhou S."/>
            <person name="Teague B."/>
            <person name="Potamousis K."/>
            <person name="Churas C."/>
            <person name="Place M."/>
            <person name="Herschleb J."/>
            <person name="Runnheim R."/>
            <person name="Forrest D."/>
            <person name="Amos-Landgraf J."/>
            <person name="Schwartz D.C."/>
            <person name="Cheng Z."/>
            <person name="Lindblad-Toh K."/>
            <person name="Eichler E.E."/>
            <person name="Ponting C.P."/>
        </authorList>
    </citation>
    <scope>NUCLEOTIDE SEQUENCE [LARGE SCALE GENOMIC DNA]</scope>
    <source>
        <strain>C57BL/6J</strain>
    </source>
</reference>
<reference key="4">
    <citation type="journal article" date="1994" name="Nature">
        <title>Excitation-contraction uncoupling and muscular degeneration in mice lacking functional skeletal muscle ryanodine-receptor gene.</title>
        <authorList>
            <person name="Takeshima H."/>
            <person name="Iino M."/>
            <person name="Takekura H."/>
            <person name="Nishi M."/>
            <person name="Kuno J."/>
            <person name="Minowa O."/>
            <person name="Takano H."/>
            <person name="Noda T."/>
        </authorList>
    </citation>
    <scope>NUCLEOTIDE SEQUENCE [GENOMIC DNA] OF 1-57</scope>
    <scope>NUCLEOTIDE SEQUENCE [MRNA] OF 1-27</scope>
    <scope>FUNCTION</scope>
    <scope>DISRUPTION PHENOTYPE</scope>
    <source>
        <strain>129/J</strain>
        <strain>BALB/cJ</strain>
        <tissue>Skeletal muscle</tissue>
    </source>
</reference>
<reference key="5">
    <citation type="thesis" date="2000" institute="University of Edinburgh" country="United Kingdom">
        <title>Characterisation of the murine Ryr1 gene.</title>
        <authorList>
            <person name="Kathirvel P."/>
        </authorList>
    </citation>
    <scope>NUCLEOTIDE SEQUENCE [GENOMIC DNA] OF 483-861</scope>
    <source>
        <strain>129</strain>
    </source>
</reference>
<reference key="6">
    <citation type="journal article" date="2004" name="Genome Res.">
        <title>The status, quality, and expansion of the NIH full-length cDNA project: the Mammalian Gene Collection (MGC).</title>
        <authorList>
            <consortium name="The MGC Project Team"/>
        </authorList>
    </citation>
    <scope>NUCLEOTIDE SEQUENCE [LARGE SCALE MRNA] OF 4500-5035</scope>
    <source>
        <strain>FVB/N-3</strain>
        <tissue>Eye</tissue>
        <tissue>Mammary tumor</tissue>
    </source>
</reference>
<reference key="7">
    <citation type="journal article" date="1995" name="J. Cell Biol.">
        <title>The ryanodine receptor/calcium channel genes are widely and differentially expressed in murine brain and peripheral tissues.</title>
        <authorList>
            <person name="Giannini G."/>
            <person name="Conti A."/>
            <person name="Mammarella S."/>
            <person name="Scrobogna M."/>
            <person name="Sorrentino V."/>
        </authorList>
    </citation>
    <scope>NUCLEOTIDE SEQUENCE [MRNA] OF 4537-5035</scope>
    <scope>TISSUE SPECIFICITY</scope>
    <source>
        <strain>BALB/cJ</strain>
        <tissue>Brain</tissue>
    </source>
</reference>
<reference key="8">
    <citation type="journal article" date="1995" name="Development">
        <title>Regulation of mouse egg activation: presence of ryanodine receptors and effects of microinjected ryanodine and cyclic ADP ribose on uninseminated and inseminated eggs.</title>
        <authorList>
            <person name="Ayabe T."/>
            <person name="Kopf G.S."/>
            <person name="Schultz R.M."/>
        </authorList>
    </citation>
    <scope>NUCLEOTIDE SEQUENCE [MRNA] OF 4762-5013</scope>
    <source>
        <tissue>Brain</tissue>
    </source>
</reference>
<reference key="9">
    <citation type="journal article" date="1995" name="EMBO J.">
        <title>Ca(2+)-induced Ca2+ release in myocytes from dyspedic mice lacking the type-1 ryanodine receptor.</title>
        <authorList>
            <person name="Takeshima H."/>
            <person name="Yamazawa T."/>
            <person name="Ikemoto T."/>
            <person name="Takekura H."/>
            <person name="Nishi M."/>
            <person name="Noda T."/>
            <person name="Iino M."/>
        </authorList>
    </citation>
    <scope>NUCLEOTIDE SEQUENCE [MRNA] OF 4913-5035</scope>
    <scope>FUNCTION</scope>
    <scope>TRANSPORTER ACTIVITY</scope>
    <scope>SUBCELLULAR LOCATION</scope>
    <scope>DOMAIN</scope>
    <scope>ACTIVITY REGULATION</scope>
    <scope>TISSUE SPECIFICITY</scope>
    <source>
        <strain>C57BL/6J</strain>
        <tissue>Skeletal muscle</tissue>
    </source>
</reference>
<reference key="10">
    <citation type="journal article" date="1995" name="Proc. Natl. Acad. Sci. U.S.A.">
        <title>Abnormal junctions between surface membrane and sarcoplasmic reticulum in skeletal muscle with a mutation targeted to the ryanodine receptor.</title>
        <authorList>
            <person name="Takekura H."/>
            <person name="Nishi M."/>
            <person name="Noda T."/>
            <person name="Takeshima H."/>
            <person name="Franzini-Armstrong C."/>
        </authorList>
    </citation>
    <scope>DOMAIN</scope>
</reference>
<reference key="11">
    <citation type="journal article" date="2008" name="Proc. Natl. Acad. Sci. U.S.A.">
        <title>Remodeling of ryanodine receptor complex causes 'leaky' channels: a molecular mechanism for decreased exercise capacity.</title>
        <authorList>
            <person name="Bellinger A.M."/>
            <person name="Reiken S."/>
            <person name="Dura M."/>
            <person name="Murphy P.W."/>
            <person name="Deng S.X."/>
            <person name="Landry D.W."/>
            <person name="Nieman D."/>
            <person name="Lehnart S.E."/>
            <person name="Samaru M."/>
            <person name="LaCampagne A."/>
            <person name="Marks A.R."/>
        </authorList>
    </citation>
    <scope>FUNCTION</scope>
    <scope>TRANSPORTER ACTIVITY</scope>
    <scope>PHOSPHORYLATION AT SER-2844</scope>
    <scope>S-NITROSYLATION</scope>
    <scope>IDENTIFICATION IN A COMPLEX WITH PDE4D; PKA; FKBP1A AND PROTEIN PHOSPHATASE 1</scope>
</reference>
<reference key="12">
    <citation type="journal article" date="2010" name="Cell">
        <title>A tissue-specific atlas of mouse protein phosphorylation and expression.</title>
        <authorList>
            <person name="Huttlin E.L."/>
            <person name="Jedrychowski M.P."/>
            <person name="Elias J.E."/>
            <person name="Goswami T."/>
            <person name="Rad R."/>
            <person name="Beausoleil S.A."/>
            <person name="Villen J."/>
            <person name="Haas W."/>
            <person name="Sowa M.E."/>
            <person name="Gygi S.P."/>
        </authorList>
    </citation>
    <scope>PHOSPHORYLATION [LARGE SCALE ANALYSIS] AT SER-2844</scope>
    <scope>IDENTIFICATION BY MASS SPECTROMETRY [LARGE SCALE ANALYSIS]</scope>
    <source>
        <tissue>Brain</tissue>
        <tissue>Brown adipose tissue</tissue>
        <tissue>Lung</tissue>
    </source>
</reference>
<reference key="13">
    <citation type="journal article" date="2012" name="EMBO J.">
        <title>Nitric oxide-induced calcium release via ryanodine receptors regulates neuronal function.</title>
        <authorList>
            <person name="Kakizawa S."/>
            <person name="Yamazawa T."/>
            <person name="Chen Y."/>
            <person name="Ito A."/>
            <person name="Murayama T."/>
            <person name="Oyamada H."/>
            <person name="Kurebayashi N."/>
            <person name="Sato O."/>
            <person name="Watanabe M."/>
            <person name="Mori N."/>
            <person name="Oguchi K."/>
            <person name="Sakurai T."/>
            <person name="Takeshima H."/>
            <person name="Saito N."/>
            <person name="Iino M."/>
        </authorList>
    </citation>
    <scope>FUNCTION IN BRAIN</scope>
    <scope>S-NITROSYLATION</scope>
    <scope>ACTIVITY REGULATION</scope>
    <scope>TISSUE SPECIFICITY</scope>
</reference>
<reference key="14">
    <citation type="journal article" date="2011" name="Mol. Pharmacol.">
        <title>Functional and biochemical properties of ryanodine receptor type 1 channels from heterozygous R163C malignant hyperthermia-susceptible mice.</title>
        <authorList>
            <person name="Feng W."/>
            <person name="Barrientos G.C."/>
            <person name="Cherednichenko G."/>
            <person name="Yang T."/>
            <person name="Padilla I.T."/>
            <person name="Truong K."/>
            <person name="Allen P.D."/>
            <person name="Lopez J.R."/>
            <person name="Pessah I.N."/>
        </authorList>
    </citation>
    <scope>FUNCTION</scope>
    <scope>TRANSPORTER ACTIVITY</scope>
    <scope>ACTIVITY REGULATION</scope>
    <scope>SUBCELLULAR LOCATION</scope>
    <scope>TISSUE SPECIFICITY</scope>
    <scope>MUTAGENESIS OF ARG-165</scope>
    <scope>PHOSPHORYLATION AT SER-2844</scope>
</reference>
<reference key="15">
    <citation type="journal article" date="2010" name="FEBS Lett.">
        <title>Ryanodine receptor studies using genetically engineered mice.</title>
        <authorList>
            <person name="Kushnir A."/>
            <person name="Betzenhauser M.J."/>
            <person name="Marks A.R."/>
        </authorList>
    </citation>
    <scope>REVIEW</scope>
</reference>
<name>RYR1_MOUSE</name>
<sequence>MGDGGGEGEDEVQFLRTDDEVVLQCSATVLKEQLKLCLAAEGFGNRLCFLEPTSNAQNVPPDLAICCFILEQSLSVRALQEMLANTVEAGVESSQGGGHRTLLYGHAILLRHAHSRMYLSCLTTSRSMTDKLAFDVGLQEDATGEACWWTMHPASKQRSEGEKVRVGDDLILVSVSSERYLHLSTASGELQVDASFMQTLWNMNPICSGCEEGFVTGGHVLRLFHGHMDECLTISPSDSDDQRRLVYYEGGPVCTHARSLWRLEPLRISWSGSHLRWGQPLRIRHVTTGRYLGLTEDQGLVVVDASKAHTKATSFCFRISKEKLDVAPKRDVEGMGPPEIKYGESLCFVQHVASGLWLTYAAPDPKALRLGVLKKKAMLHQEGHMDDALSLTRCQQEESQAARMIYSTAGLYNQFIKGLDSFSGKPRGSGPPAGSALPIEGVILSLQDLIGYFEPPSEELQHEEKQTKLRSLRNRQSLFQEEGMLSLVLNCIDRLNVYTTAAHFAEFAGEEAAESWKEIVNLLYELLASLIRGNRTNCALFSTNLDWLVSKLDRLEASSGILEVLYCVLIESPEVLNIIQENHIKSIISLLDKHGRNHKVLDVLCSLCVCNGVAVRSNQDLITENLLPGRELLLQTNLINYVTSIRPNIFVGRAEGSTQYGKWYFEVMVDEVAPFLTAQATHLRVGWALSEGYSPYPGGGEGWGGNGVGDDLYSYGFDGLHLWTGHVARPVTSPGQHLLAPEDVVSCCLDLSVPSISFRINGCPVQGVFESFNLDGLFFPVVSFSAGIKVRFLLGGRHGEFKFLPPPGYAPCHEAVLPRERLHLQPIKEYRREGPRGPHLVGPSRCLSHLDFVPCPVDTIQIVLPPHLERIREKLAENIHELWALTRIEQGWTYGPVRDDNKRLHPCLVNFHSLPEPERNYNLQMSGETLKTLLALGCHVGMADEKAEDNLKKTKLPKTYMMSNGYKPAPLDLSHVRLTPAQTTLVDRLAENGHNVWARDRVAQGWSYSAVQDIPARRNPRLVPYRLLDEATKRSNRDSLCQAVRTLLGYGYNIEPPDQEPSQVDSQSRGDRARIFRAEKSYAVQSGRWYFEFEAVTTGEMRVGWARPELRPDVELGADDLAYVFNGHRGQRWHLGSEPFGRPWQSGDVVGCMIDLTENTIIFTLNGEVLMSDSGSETAFRDIEIGDGFLPVCSLGPGQVGHLNLGQDVSSLRFFAICGLQEGFEPFAINMQRPVTTWFSKSLPQFEPVPLEHPHYEVARMDGTVDTPPCLRLTHRTWGSQNSLVEMLFLRLSLPVQFHQHFRCTAGATPLASPGLQPPAEDEARAAEPDTDYENLRRSAGGWGEAEGGKDGTAKEGTPGGTAQAGVEAQPARAENEKDATTEKNKKRGFLFKAKKVAMMTQPPSTPALPRLPRDVVPADNRDDPEIILNTTTYYYSVRVFAGQEPSCVWVGWVTPDYHQHDMSFDLSKVRAVTVTMGDEQGNVHSSLKCSNCYMVWGGDFVSPGQQGRISHTDLVIGCLVDLATGLMTFTANGKESNTFFQVEPNTKLFPAVFVLPTHQNVVQFELGKQKNIMPLSAAMFLSERKNPAPQCPPRLEVQMLMPVSWSRMPNHFLQVDTRRAGERLGWAVQCQEPLMMMALHIPEENRCMDILELSERLDLQRFHSHTLSLYRSVCALGNNRVAHALCSHVDQAQLLHALEDARLPGPLRAGYYDLLISIHLESACRSRRSMLSEYIVPLTPETRAITLFPPGRSAEDGPRRHGLPGVGVTTSLRPPHHFSPPCFVVALPAAGATEAPARLSPAIPLEALRDKALRMLGEAVRDGGQHARDPVGGSVEFQFVPVLKLVSTLLVMGVFSDEDVKQILKMIEPEVFREEEEVEEEGEEEEEDEEEKEEDEEEEAHEKEDEEKEEAEDAAEEEKEELEEGLLQMKLPESVKLQMCHLLEYFCDQELQHRVESLAAFAECYVDKMQGNQRGRYGLLMKAFTMSAAETARRTREFRSPPQEQINMLLHFKNGADEEECPLPEEIRQELVNFHQDLLAHCGIQLEGEEEEPEEESTLGSRLMSLLEKVKLVKKTEEKPEEEPAPEEHKPQSLQELVSHTVVRWAQEDFVQSPELVRAMFSLLHRQYDGLGELLRALPRAYTISVSSVEDTMSLLECLGQIRSLLIVQMGPQEENLMIQSIGNIMNNKVFYQHPNLMRALGMHETVMEVMVNVLGGGESKEIRFPKMVTSCCRFLCYFCRISRQNQRSMFDHLSYLLENSGIGLGMQGSTPLDVAAASVIDNNELALALQEQDLEKVVSYLAGCGLQSCPMLLAKGYPDIGWNPCGGERYLDFLRFAVFVNGESVEENANVVVRLLIRKPECFGPALRGEGGSGLLAAIEEAIRISEDPARDGPGVRRDRRREHFGEEPPEENRVHLGHAIMSFYAALIDLLGRCAPETHLIQAGKGEALRIRAILRSLVPLDDLVGIISLPLQIPTLGKDGALVQPKMSASFVPDHKASMVLFLDRVYGIENQDFLLHVLDVGFLPDMRAAASLDTATFSTTEMALALNRYLCLAVLPLITKCAPLFAGTEHRAIMVDSMLHTVYRLSRGRSLTKAQRDVIEDCLMALCRYIRPSMLQHLLRRLVFDVPILNEFAKMPLKLLTNHYERCWKYYCLPTGWANFGVTSEEELHLTRKLFWGIFDSLAHKKYDQELYRIAMPCLCAIAGALPPDYVDASYSSKTEKKATVDAEGNFDPRPVETLNVIIPEKLDSFINKFAEYTHEKWAFDKIQNNWSYGENIDEELKTHPMLRPYKTFSEKDKEIYRWPIKESLKAMIAWEWTVEKAREGEEEKTEKKKTRKISQTAQTYDPREGYNPQPPDLSVVTLSRELQAMAEQLAENYHNTWGRKKKQELEAKGGGSHPLLVPYDTLTAKEKARDREKAQELLKFLQMNGYAVTRGLKDMELDTSSIEKRFAFGFLQQLLRWMDISQEFIAHLEAVVSSGRVEKSPHEQEIKFFAKILLPLINQYFTNHCLYFLSTPAKVLGSGGHASNKEKEMITSLFCKLAALVRHRVSLFGTDAPAVVNCLHILARSLDARTVMKSGPEIVKAGLRSFFESASEDIEKMVENLRLGKVSQARTQVKGVGQNLTYTTVALLPVLTTLFQHIAQHQFGDDVILDDVQVSCYRTLCSIYSLGTTRNPYVEKLRPALGECLARLAAAMPVAFLEPELNEYNACSVYTTKSPRERAILGLPNSVEEMCPDIPVLERLMAEIGGLAESGARYTEMPHVIEITLPMLCSYLPRWWERGPEAPPPALPAGAPPPCTAVTSDHLNSLLGNILRIIVNNLGIDEASWMKRLAVFAQPIVSRARPELLRSHFIPTIGRLRKRAGKVVAEEEQLRLEAKAEAEEGELLVRDEFSVLCRDLYALYPLLIRYVDNNRAHWLTEPNPNAEELFRMVGEIFIYWSKSHNFKREEQNFVVQNEINNMSFLTADNKSKMAKAGDVQSGGSDQERTKKKRRGDRYSVQTSLIVATLKKMLPIGLNMCAPTDQDLIVLAKARYALKDTDEEVREFLQNNLNLQGKVEGSPSLRWQMALYRGVPGREEDADDPEKIVRRVQEVSAVLYHLDQTEHPYKSKKAVWHKLLSKQRRRAVVACFRMTPLYNLPTHRACNMFLESYKASWILTEDHSFEDRMIDDLSKAGEQEEEEEEVEEKKPDPLHQLVLHFSRTALTEKSKLDEDYLYMAYADIMAKSCHLEEGGENGEEGGEEEEVEVSFEEKEMEKQRLLYQQSRLHNRGAAEMVLQMISACKGETGAMVSSTLKLGISILNGGNAEVQQKMLDYLKDKKEVGFFQSIQALMQTCSVLDLNAFERQNKAEGLGMVNEDGTVINRQNGEKVMADDEFTQDLFRFLQLLCEGHNNDFQNYLRTQTGNTTTINIIICTVDYLLRLQESISDFYWYYSGKDVIEEQGKRNFSKAMSVAKQVFNSLTEYIQGPCTGNQQSLAHSRLWDAVVGFLHVFAHMMMKLAQDSSQIELLKELLDLQKDMVVMLLSLLEGNVVNGMIARQMVDMLVESSSNVEMILKFFDMFLKLKDIVGSEAFQDYVTDPRGLISKKDFQKAMDSQKQFTGPEIQFLLSCSEADENEMINCEEFANRFQEPARDIGFNVAVLLTNLSEHVPHDPRLRNFLELAESILEYFRPYLGRIEIMGASRRIERIYFEISETNRAQWEMPQVKESKRQFIFDVVNEGGESEKMEMFVSFCEDTIFEMQIAAQISEPEGEPEEDEDEGAEEAEEGAAGSDGSGSAAAAGVWVWLAATAGRTLRGLSYRSLRRRVRRLRRLTAREAATAVAALLWALVTRAGGAGAGAAAGALRLLWGSLFGGGLVDSAKKVTVTELLAGMPDPTGDEVHGQQPSGAGSDAEGEGEGEGEGDAADGAGDEEAAADQAGTGGADGAVAVADGSPFRPEGAGGLGDMGDTTPVEPPTPEGSPILKRKLGVDGEEEEPPPEPEPEPEPEPEKADTENGEKEVPEPPPEPPKKTPPPPPPKKEEAGGAGLEEFWGELEVQRVKFLNYLSRNFYTLRFLALFLAFAINFILLFYKVSDSPPGEDDIEGSGAGDMSGAGSGDGSGWGSRAGEEVEGDEDENMVYYFLEESTGYMEPALRCLSLLHTLVAFLCIIGYNCLKVPLVIFKREKELARKLEFDGLYITEQPEDDDVKGQWDRLVLNTPSFPSNYWDKFVKRKVLDKHGDIFGRERIAELLGMDLASLEITAHNERKPDPPPGLLTWIMSIDVKYQIWKFGVIFTDNSFLYLGWYMVMSLLGHYNNFFFAAHLLDIAMGVKTLRTILSSVTHNGKQLVMTVGLLAVVVYLYTVVAFNFFRKFYNKSEDEDEPDMKCDDMMTCYLFHMYVGVRAGGGIGDEIEDPAGDEYELYRVVFDITFFFFVIVILLAIIQGLIIDAFGELRDQQEQVKEDMETKCFICGIGSDYFDTTPHGFETHTLEEHNLANYMFFLMYLINKDETEHTGQESYVWKMYQERCWDFFPAGDCFRKQYEDQLS</sequence>